<organism>
    <name type="scientific">Streptococcus pneumoniae serotype 2 (strain D39 / NCTC 7466)</name>
    <dbReference type="NCBI Taxonomy" id="373153"/>
    <lineage>
        <taxon>Bacteria</taxon>
        <taxon>Bacillati</taxon>
        <taxon>Bacillota</taxon>
        <taxon>Bacilli</taxon>
        <taxon>Lactobacillales</taxon>
        <taxon>Streptococcaceae</taxon>
        <taxon>Streptococcus</taxon>
    </lineage>
</organism>
<keyword id="KW-1185">Reference proteome</keyword>
<keyword id="KW-0687">Ribonucleoprotein</keyword>
<keyword id="KW-0689">Ribosomal protein</keyword>
<keyword id="KW-0694">RNA-binding</keyword>
<keyword id="KW-0699">rRNA-binding</keyword>
<comment type="function">
    <text evidence="1">One of the primary rRNA binding proteins, this protein initially binds near the 5'-end of the 23S rRNA. It is important during the early stages of 50S assembly. It makes multiple contacts with different domains of the 23S rRNA in the assembled 50S subunit and ribosome.</text>
</comment>
<comment type="function">
    <text evidence="1">Forms part of the polypeptide exit tunnel.</text>
</comment>
<comment type="subunit">
    <text evidence="1">Part of the 50S ribosomal subunit.</text>
</comment>
<comment type="similarity">
    <text evidence="1">Belongs to the universal ribosomal protein uL4 family.</text>
</comment>
<evidence type="ECO:0000255" key="1">
    <source>
        <dbReference type="HAMAP-Rule" id="MF_01328"/>
    </source>
</evidence>
<evidence type="ECO:0000256" key="2">
    <source>
        <dbReference type="SAM" id="MobiDB-lite"/>
    </source>
</evidence>
<evidence type="ECO:0000305" key="3"/>
<sequence>MANVTLFDQTGKEAGQVVLSDAVFGIEPNESVVFDVIISQRASLRQGTHAVKNRSAVSGGGRKPWRQKGTGRARQGSIRSPQWRGGGVVFGPTPRSYGYKLPQKVRRLALKSVYSEKVAENKFVAVDALSFTAPKTAEFAKVLAALSIDSKVLVILEEGNEFAALSARNLPNVKVATATTASVLDIANSDKLLVTQAAISKIEEVLA</sequence>
<accession>Q04MN5</accession>
<name>RL4_STRP2</name>
<proteinExistence type="inferred from homology"/>
<protein>
    <recommendedName>
        <fullName evidence="1">Large ribosomal subunit protein uL4</fullName>
    </recommendedName>
    <alternativeName>
        <fullName evidence="3">50S ribosomal protein L4</fullName>
    </alternativeName>
</protein>
<gene>
    <name evidence="1" type="primary">rplD</name>
    <name type="ordered locus">SPD_0194</name>
</gene>
<dbReference type="EMBL" id="CP000410">
    <property type="protein sequence ID" value="ABJ53662.1"/>
    <property type="molecule type" value="Genomic_DNA"/>
</dbReference>
<dbReference type="RefSeq" id="WP_000024543.1">
    <property type="nucleotide sequence ID" value="NZ_JAMLJR010000002.1"/>
</dbReference>
<dbReference type="SMR" id="Q04MN5"/>
<dbReference type="PaxDb" id="373153-SPD_0194"/>
<dbReference type="GeneID" id="45652308"/>
<dbReference type="KEGG" id="spd:SPD_0194"/>
<dbReference type="eggNOG" id="COG0088">
    <property type="taxonomic scope" value="Bacteria"/>
</dbReference>
<dbReference type="HOGENOM" id="CLU_041575_5_2_9"/>
<dbReference type="BioCyc" id="SPNE373153:G1G6V-217-MONOMER"/>
<dbReference type="Proteomes" id="UP000001452">
    <property type="component" value="Chromosome"/>
</dbReference>
<dbReference type="GO" id="GO:1990904">
    <property type="term" value="C:ribonucleoprotein complex"/>
    <property type="evidence" value="ECO:0007669"/>
    <property type="project" value="UniProtKB-KW"/>
</dbReference>
<dbReference type="GO" id="GO:0005840">
    <property type="term" value="C:ribosome"/>
    <property type="evidence" value="ECO:0007669"/>
    <property type="project" value="UniProtKB-KW"/>
</dbReference>
<dbReference type="GO" id="GO:0019843">
    <property type="term" value="F:rRNA binding"/>
    <property type="evidence" value="ECO:0007669"/>
    <property type="project" value="UniProtKB-UniRule"/>
</dbReference>
<dbReference type="GO" id="GO:0003735">
    <property type="term" value="F:structural constituent of ribosome"/>
    <property type="evidence" value="ECO:0007669"/>
    <property type="project" value="InterPro"/>
</dbReference>
<dbReference type="GO" id="GO:0006412">
    <property type="term" value="P:translation"/>
    <property type="evidence" value="ECO:0007669"/>
    <property type="project" value="UniProtKB-UniRule"/>
</dbReference>
<dbReference type="FunFam" id="3.40.1370.10:FF:000003">
    <property type="entry name" value="50S ribosomal protein L4"/>
    <property type="match status" value="1"/>
</dbReference>
<dbReference type="Gene3D" id="3.40.1370.10">
    <property type="match status" value="1"/>
</dbReference>
<dbReference type="HAMAP" id="MF_01328_B">
    <property type="entry name" value="Ribosomal_uL4_B"/>
    <property type="match status" value="1"/>
</dbReference>
<dbReference type="InterPro" id="IPR002136">
    <property type="entry name" value="Ribosomal_uL4"/>
</dbReference>
<dbReference type="InterPro" id="IPR013005">
    <property type="entry name" value="Ribosomal_uL4-like"/>
</dbReference>
<dbReference type="InterPro" id="IPR023574">
    <property type="entry name" value="Ribosomal_uL4_dom_sf"/>
</dbReference>
<dbReference type="NCBIfam" id="TIGR03953">
    <property type="entry name" value="rplD_bact"/>
    <property type="match status" value="1"/>
</dbReference>
<dbReference type="PANTHER" id="PTHR10746">
    <property type="entry name" value="50S RIBOSOMAL PROTEIN L4"/>
    <property type="match status" value="1"/>
</dbReference>
<dbReference type="PANTHER" id="PTHR10746:SF6">
    <property type="entry name" value="LARGE RIBOSOMAL SUBUNIT PROTEIN UL4M"/>
    <property type="match status" value="1"/>
</dbReference>
<dbReference type="Pfam" id="PF00573">
    <property type="entry name" value="Ribosomal_L4"/>
    <property type="match status" value="1"/>
</dbReference>
<dbReference type="SUPFAM" id="SSF52166">
    <property type="entry name" value="Ribosomal protein L4"/>
    <property type="match status" value="1"/>
</dbReference>
<feature type="chain" id="PRO_1000052509" description="Large ribosomal subunit protein uL4">
    <location>
        <begin position="1"/>
        <end position="207"/>
    </location>
</feature>
<feature type="region of interest" description="Disordered" evidence="2">
    <location>
        <begin position="49"/>
        <end position="78"/>
    </location>
</feature>
<reference key="1">
    <citation type="journal article" date="2007" name="J. Bacteriol.">
        <title>Genome sequence of Avery's virulent serotype 2 strain D39 of Streptococcus pneumoniae and comparison with that of unencapsulated laboratory strain R6.</title>
        <authorList>
            <person name="Lanie J.A."/>
            <person name="Ng W.-L."/>
            <person name="Kazmierczak K.M."/>
            <person name="Andrzejewski T.M."/>
            <person name="Davidsen T.M."/>
            <person name="Wayne K.J."/>
            <person name="Tettelin H."/>
            <person name="Glass J.I."/>
            <person name="Winkler M.E."/>
        </authorList>
    </citation>
    <scope>NUCLEOTIDE SEQUENCE [LARGE SCALE GENOMIC DNA]</scope>
    <source>
        <strain>D39 / NCTC 7466</strain>
    </source>
</reference>